<organism>
    <name type="scientific">Staphylococcus saprophyticus subsp. saprophyticus (strain ATCC 15305 / DSM 20229 / NCIMB 8711 / NCTC 7292 / S-41)</name>
    <dbReference type="NCBI Taxonomy" id="342451"/>
    <lineage>
        <taxon>Bacteria</taxon>
        <taxon>Bacillati</taxon>
        <taxon>Bacillota</taxon>
        <taxon>Bacilli</taxon>
        <taxon>Bacillales</taxon>
        <taxon>Staphylococcaceae</taxon>
        <taxon>Staphylococcus</taxon>
    </lineage>
</organism>
<protein>
    <recommendedName>
        <fullName evidence="1">Lysine--tRNA ligase</fullName>
        <ecNumber evidence="1">6.1.1.6</ecNumber>
    </recommendedName>
    <alternativeName>
        <fullName evidence="1">Lysyl-tRNA synthetase</fullName>
        <shortName evidence="1">LysRS</shortName>
    </alternativeName>
</protein>
<dbReference type="EC" id="6.1.1.6" evidence="1"/>
<dbReference type="EMBL" id="AP008934">
    <property type="protein sequence ID" value="BAE19384.1"/>
    <property type="molecule type" value="Genomic_DNA"/>
</dbReference>
<dbReference type="RefSeq" id="WP_011303859.1">
    <property type="nucleotide sequence ID" value="NZ_MTGA01000029.1"/>
</dbReference>
<dbReference type="SMR" id="Q49V26"/>
<dbReference type="GeneID" id="3615569"/>
<dbReference type="KEGG" id="ssp:SSP2239"/>
<dbReference type="PATRIC" id="fig|342451.11.peg.2230"/>
<dbReference type="eggNOG" id="COG1190">
    <property type="taxonomic scope" value="Bacteria"/>
</dbReference>
<dbReference type="HOGENOM" id="CLU_008255_6_0_9"/>
<dbReference type="OrthoDB" id="9801152at2"/>
<dbReference type="Proteomes" id="UP000006371">
    <property type="component" value="Chromosome"/>
</dbReference>
<dbReference type="GO" id="GO:0005829">
    <property type="term" value="C:cytosol"/>
    <property type="evidence" value="ECO:0007669"/>
    <property type="project" value="TreeGrafter"/>
</dbReference>
<dbReference type="GO" id="GO:0005524">
    <property type="term" value="F:ATP binding"/>
    <property type="evidence" value="ECO:0007669"/>
    <property type="project" value="UniProtKB-UniRule"/>
</dbReference>
<dbReference type="GO" id="GO:0140096">
    <property type="term" value="F:catalytic activity, acting on a protein"/>
    <property type="evidence" value="ECO:0007669"/>
    <property type="project" value="UniProtKB-ARBA"/>
</dbReference>
<dbReference type="GO" id="GO:0004824">
    <property type="term" value="F:lysine-tRNA ligase activity"/>
    <property type="evidence" value="ECO:0007669"/>
    <property type="project" value="UniProtKB-UniRule"/>
</dbReference>
<dbReference type="GO" id="GO:0000287">
    <property type="term" value="F:magnesium ion binding"/>
    <property type="evidence" value="ECO:0007669"/>
    <property type="project" value="UniProtKB-UniRule"/>
</dbReference>
<dbReference type="GO" id="GO:0016740">
    <property type="term" value="F:transferase activity"/>
    <property type="evidence" value="ECO:0007669"/>
    <property type="project" value="UniProtKB-ARBA"/>
</dbReference>
<dbReference type="GO" id="GO:0000049">
    <property type="term" value="F:tRNA binding"/>
    <property type="evidence" value="ECO:0007669"/>
    <property type="project" value="TreeGrafter"/>
</dbReference>
<dbReference type="GO" id="GO:0006430">
    <property type="term" value="P:lysyl-tRNA aminoacylation"/>
    <property type="evidence" value="ECO:0007669"/>
    <property type="project" value="UniProtKB-UniRule"/>
</dbReference>
<dbReference type="CDD" id="cd00775">
    <property type="entry name" value="LysRS_core"/>
    <property type="match status" value="1"/>
</dbReference>
<dbReference type="CDD" id="cd04322">
    <property type="entry name" value="LysRS_N"/>
    <property type="match status" value="1"/>
</dbReference>
<dbReference type="FunFam" id="2.40.50.140:FF:000024">
    <property type="entry name" value="Lysine--tRNA ligase"/>
    <property type="match status" value="1"/>
</dbReference>
<dbReference type="FunFam" id="3.30.930.10:FF:000001">
    <property type="entry name" value="Lysine--tRNA ligase"/>
    <property type="match status" value="1"/>
</dbReference>
<dbReference type="Gene3D" id="3.30.930.10">
    <property type="entry name" value="Bira Bifunctional Protein, Domain 2"/>
    <property type="match status" value="1"/>
</dbReference>
<dbReference type="Gene3D" id="2.40.50.140">
    <property type="entry name" value="Nucleic acid-binding proteins"/>
    <property type="match status" value="1"/>
</dbReference>
<dbReference type="HAMAP" id="MF_00252">
    <property type="entry name" value="Lys_tRNA_synth_class2"/>
    <property type="match status" value="1"/>
</dbReference>
<dbReference type="InterPro" id="IPR004364">
    <property type="entry name" value="Aa-tRNA-synt_II"/>
</dbReference>
<dbReference type="InterPro" id="IPR006195">
    <property type="entry name" value="aa-tRNA-synth_II"/>
</dbReference>
<dbReference type="InterPro" id="IPR045864">
    <property type="entry name" value="aa-tRNA-synth_II/BPL/LPL"/>
</dbReference>
<dbReference type="InterPro" id="IPR002313">
    <property type="entry name" value="Lys-tRNA-ligase_II"/>
</dbReference>
<dbReference type="InterPro" id="IPR034762">
    <property type="entry name" value="Lys-tRNA-ligase_II_bac/euk"/>
</dbReference>
<dbReference type="InterPro" id="IPR044136">
    <property type="entry name" value="Lys-tRNA-ligase_II_N"/>
</dbReference>
<dbReference type="InterPro" id="IPR018149">
    <property type="entry name" value="Lys-tRNA-synth_II_C"/>
</dbReference>
<dbReference type="InterPro" id="IPR012340">
    <property type="entry name" value="NA-bd_OB-fold"/>
</dbReference>
<dbReference type="InterPro" id="IPR004365">
    <property type="entry name" value="NA-bd_OB_tRNA"/>
</dbReference>
<dbReference type="NCBIfam" id="TIGR00499">
    <property type="entry name" value="lysS_bact"/>
    <property type="match status" value="1"/>
</dbReference>
<dbReference type="NCBIfam" id="NF001756">
    <property type="entry name" value="PRK00484.1"/>
    <property type="match status" value="1"/>
</dbReference>
<dbReference type="PANTHER" id="PTHR42918:SF15">
    <property type="entry name" value="LYSINE--TRNA LIGASE, CHLOROPLASTIC_MITOCHONDRIAL"/>
    <property type="match status" value="1"/>
</dbReference>
<dbReference type="PANTHER" id="PTHR42918">
    <property type="entry name" value="LYSYL-TRNA SYNTHETASE"/>
    <property type="match status" value="1"/>
</dbReference>
<dbReference type="Pfam" id="PF00152">
    <property type="entry name" value="tRNA-synt_2"/>
    <property type="match status" value="1"/>
</dbReference>
<dbReference type="Pfam" id="PF01336">
    <property type="entry name" value="tRNA_anti-codon"/>
    <property type="match status" value="1"/>
</dbReference>
<dbReference type="PIRSF" id="PIRSF039101">
    <property type="entry name" value="LysRS2"/>
    <property type="match status" value="1"/>
</dbReference>
<dbReference type="PRINTS" id="PR00982">
    <property type="entry name" value="TRNASYNTHLYS"/>
</dbReference>
<dbReference type="SUPFAM" id="SSF55681">
    <property type="entry name" value="Class II aaRS and biotin synthetases"/>
    <property type="match status" value="1"/>
</dbReference>
<dbReference type="SUPFAM" id="SSF50249">
    <property type="entry name" value="Nucleic acid-binding proteins"/>
    <property type="match status" value="1"/>
</dbReference>
<dbReference type="PROSITE" id="PS50862">
    <property type="entry name" value="AA_TRNA_LIGASE_II"/>
    <property type="match status" value="1"/>
</dbReference>
<gene>
    <name evidence="1" type="primary">lysS</name>
    <name type="ordered locus">SSP2239</name>
</gene>
<proteinExistence type="inferred from homology"/>
<reference key="1">
    <citation type="journal article" date="2005" name="Proc. Natl. Acad. Sci. U.S.A.">
        <title>Whole genome sequence of Staphylococcus saprophyticus reveals the pathogenesis of uncomplicated urinary tract infection.</title>
        <authorList>
            <person name="Kuroda M."/>
            <person name="Yamashita A."/>
            <person name="Hirakawa H."/>
            <person name="Kumano M."/>
            <person name="Morikawa K."/>
            <person name="Higashide M."/>
            <person name="Maruyama A."/>
            <person name="Inose Y."/>
            <person name="Matoba K."/>
            <person name="Toh H."/>
            <person name="Kuhara S."/>
            <person name="Hattori M."/>
            <person name="Ohta T."/>
        </authorList>
    </citation>
    <scope>NUCLEOTIDE SEQUENCE [LARGE SCALE GENOMIC DNA]</scope>
    <source>
        <strain>ATCC 15305 / DSM 20229 / NCIMB 8711 / NCTC 7292 / S-41</strain>
    </source>
</reference>
<comment type="catalytic activity">
    <reaction evidence="1">
        <text>tRNA(Lys) + L-lysine + ATP = L-lysyl-tRNA(Lys) + AMP + diphosphate</text>
        <dbReference type="Rhea" id="RHEA:20792"/>
        <dbReference type="Rhea" id="RHEA-COMP:9696"/>
        <dbReference type="Rhea" id="RHEA-COMP:9697"/>
        <dbReference type="ChEBI" id="CHEBI:30616"/>
        <dbReference type="ChEBI" id="CHEBI:32551"/>
        <dbReference type="ChEBI" id="CHEBI:33019"/>
        <dbReference type="ChEBI" id="CHEBI:78442"/>
        <dbReference type="ChEBI" id="CHEBI:78529"/>
        <dbReference type="ChEBI" id="CHEBI:456215"/>
        <dbReference type="EC" id="6.1.1.6"/>
    </reaction>
</comment>
<comment type="cofactor">
    <cofactor evidence="1">
        <name>Mg(2+)</name>
        <dbReference type="ChEBI" id="CHEBI:18420"/>
    </cofactor>
    <text evidence="1">Binds 3 Mg(2+) ions per subunit.</text>
</comment>
<comment type="subunit">
    <text evidence="1">Homodimer.</text>
</comment>
<comment type="subcellular location">
    <subcellularLocation>
        <location evidence="1">Cytoplasm</location>
    </subcellularLocation>
</comment>
<comment type="similarity">
    <text evidence="1">Belongs to the class-II aminoacyl-tRNA synthetase family.</text>
</comment>
<sequence length="495" mass="56984">MSEEMNDQMQVRRQKLQELYDLGIDPFGQKFDRTSMATPLHEDWDQFSKEELHEKEEESHVSIAGRLMTKRGKGKAGFAHVQDLSGQIQIYVRKDQVGEDQFAIWNSADLGDIVGVEGVMFKTNTGELSVKAQSFTLLTKALRPLPDKFHGLQDIEQRYRQRYLDLITNQDSTQTFIKRSKILQEMRNYLNQQGFLEVETPMMHQIAGGAAARPFVTHHNALDATLYMRIAIELHLKRLIVGGLEKVYEIGRVFRNEGVSTRHNPEFTMIELYEAYADYHDIMDITENMIRHISEKVLGTAKVTYGEETIDLESKWKRIHMADAVKEETGVDFFNIQSDEDAKIAAKEHGIEITDNMKYGHILNEFFEQKVEETLIQPTFVYGHPIEISPLAKKNAEDPRFTDRFELFIVGREHGNAFTELNDPIDQRARFEAQLVEKEQGNDEAHEMDEDFIEALEYGMPPTGGLGIGIDRLVMLLTDSASIRDVLLFPYMRQK</sequence>
<accession>Q49V26</accession>
<keyword id="KW-0030">Aminoacyl-tRNA synthetase</keyword>
<keyword id="KW-0067">ATP-binding</keyword>
<keyword id="KW-0963">Cytoplasm</keyword>
<keyword id="KW-0436">Ligase</keyword>
<keyword id="KW-0460">Magnesium</keyword>
<keyword id="KW-0479">Metal-binding</keyword>
<keyword id="KW-0547">Nucleotide-binding</keyword>
<keyword id="KW-0648">Protein biosynthesis</keyword>
<keyword id="KW-1185">Reference proteome</keyword>
<name>SYK_STAS1</name>
<evidence type="ECO:0000255" key="1">
    <source>
        <dbReference type="HAMAP-Rule" id="MF_00252"/>
    </source>
</evidence>
<feature type="chain" id="PRO_1000012944" description="Lysine--tRNA ligase">
    <location>
        <begin position="1"/>
        <end position="495"/>
    </location>
</feature>
<feature type="binding site" evidence="1">
    <location>
        <position position="406"/>
    </location>
    <ligand>
        <name>Mg(2+)</name>
        <dbReference type="ChEBI" id="CHEBI:18420"/>
        <label>1</label>
    </ligand>
</feature>
<feature type="binding site" evidence="1">
    <location>
        <position position="413"/>
    </location>
    <ligand>
        <name>Mg(2+)</name>
        <dbReference type="ChEBI" id="CHEBI:18420"/>
        <label>1</label>
    </ligand>
</feature>
<feature type="binding site" evidence="1">
    <location>
        <position position="413"/>
    </location>
    <ligand>
        <name>Mg(2+)</name>
        <dbReference type="ChEBI" id="CHEBI:18420"/>
        <label>2</label>
    </ligand>
</feature>